<evidence type="ECO:0000250" key="1"/>
<evidence type="ECO:0000250" key="2">
    <source>
        <dbReference type="UniProtKB" id="Q9Y5X1"/>
    </source>
</evidence>
<evidence type="ECO:0000255" key="3">
    <source>
        <dbReference type="PROSITE-ProRule" id="PRU00147"/>
    </source>
</evidence>
<evidence type="ECO:0000255" key="4">
    <source>
        <dbReference type="PROSITE-ProRule" id="PRU00192"/>
    </source>
</evidence>
<evidence type="ECO:0000256" key="5">
    <source>
        <dbReference type="SAM" id="MobiDB-lite"/>
    </source>
</evidence>
<evidence type="ECO:0000269" key="6">
    <source>
    </source>
</evidence>
<evidence type="ECO:0000269" key="7">
    <source>
    </source>
</evidence>
<evidence type="ECO:0000305" key="8"/>
<evidence type="ECO:0007744" key="9">
    <source>
    </source>
</evidence>
<evidence type="ECO:0007744" key="10">
    <source>
    </source>
</evidence>
<evidence type="ECO:0007829" key="11">
    <source>
        <dbReference type="PDB" id="2ENM"/>
    </source>
</evidence>
<dbReference type="EMBL" id="BC014814">
    <property type="protein sequence ID" value="AAH14814.1"/>
    <property type="molecule type" value="mRNA"/>
</dbReference>
<dbReference type="CCDS" id="CCDS57041.1"/>
<dbReference type="RefSeq" id="NP_079940.2">
    <property type="nucleotide sequence ID" value="NM_025664.5"/>
</dbReference>
<dbReference type="PDB" id="2ENM">
    <property type="method" value="NMR"/>
    <property type="chains" value="A=1-70"/>
</dbReference>
<dbReference type="PDBsum" id="2ENM"/>
<dbReference type="SMR" id="Q91VH2"/>
<dbReference type="BioGRID" id="211598">
    <property type="interactions" value="8"/>
</dbReference>
<dbReference type="DIP" id="DIP-60857N"/>
<dbReference type="FunCoup" id="Q91VH2">
    <property type="interactions" value="1634"/>
</dbReference>
<dbReference type="IntAct" id="Q91VH2">
    <property type="interactions" value="3"/>
</dbReference>
<dbReference type="MINT" id="Q91VH2"/>
<dbReference type="STRING" id="10090.ENSMUSP00000002436"/>
<dbReference type="iPTMnet" id="Q91VH2"/>
<dbReference type="PhosphoSitePlus" id="Q91VH2"/>
<dbReference type="SwissPalm" id="Q91VH2"/>
<dbReference type="jPOST" id="Q91VH2"/>
<dbReference type="PaxDb" id="10090-ENSMUSP00000002436"/>
<dbReference type="ProteomicsDB" id="261306"/>
<dbReference type="Pumba" id="Q91VH2"/>
<dbReference type="Antibodypedia" id="33429">
    <property type="antibodies" value="420 antibodies from 33 providers"/>
</dbReference>
<dbReference type="DNASU" id="66616"/>
<dbReference type="Ensembl" id="ENSMUST00000002436.11">
    <property type="protein sequence ID" value="ENSMUSP00000002436.10"/>
    <property type="gene ID" value="ENSMUSG00000002365.11"/>
</dbReference>
<dbReference type="GeneID" id="66616"/>
<dbReference type="KEGG" id="mmu:66616"/>
<dbReference type="UCSC" id="uc008afj.1">
    <property type="organism name" value="mouse"/>
</dbReference>
<dbReference type="AGR" id="MGI:1913866"/>
<dbReference type="CTD" id="51429"/>
<dbReference type="MGI" id="MGI:1913866">
    <property type="gene designation" value="Snx9"/>
</dbReference>
<dbReference type="VEuPathDB" id="HostDB:ENSMUSG00000002365"/>
<dbReference type="eggNOG" id="KOG2528">
    <property type="taxonomic scope" value="Eukaryota"/>
</dbReference>
<dbReference type="GeneTree" id="ENSGT00940000156557"/>
<dbReference type="HOGENOM" id="CLU_021494_2_0_1"/>
<dbReference type="InParanoid" id="Q91VH2"/>
<dbReference type="OMA" id="FDSAPMR"/>
<dbReference type="OrthoDB" id="10254720at2759"/>
<dbReference type="PhylomeDB" id="Q91VH2"/>
<dbReference type="TreeFam" id="TF314082"/>
<dbReference type="Reactome" id="R-MMU-432722">
    <property type="pathway name" value="Golgi Associated Vesicle Biogenesis"/>
</dbReference>
<dbReference type="Reactome" id="R-MMU-8856828">
    <property type="pathway name" value="Clathrin-mediated endocytosis"/>
</dbReference>
<dbReference type="BioGRID-ORCS" id="66616">
    <property type="hits" value="5 hits in 77 CRISPR screens"/>
</dbReference>
<dbReference type="ChiTaRS" id="Snx9">
    <property type="organism name" value="mouse"/>
</dbReference>
<dbReference type="EvolutionaryTrace" id="Q91VH2"/>
<dbReference type="PRO" id="PR:Q91VH2"/>
<dbReference type="Proteomes" id="UP000000589">
    <property type="component" value="Chromosome 17"/>
</dbReference>
<dbReference type="RNAct" id="Q91VH2">
    <property type="molecule type" value="protein"/>
</dbReference>
<dbReference type="Bgee" id="ENSMUSG00000002365">
    <property type="expression patterns" value="Expressed in ileal epithelium and 261 other cell types or tissues"/>
</dbReference>
<dbReference type="ExpressionAtlas" id="Q91VH2">
    <property type="expression patterns" value="baseline and differential"/>
</dbReference>
<dbReference type="GO" id="GO:0005905">
    <property type="term" value="C:clathrin-coated pit"/>
    <property type="evidence" value="ECO:0000250"/>
    <property type="project" value="UniProtKB"/>
</dbReference>
<dbReference type="GO" id="GO:0030136">
    <property type="term" value="C:clathrin-coated vesicle"/>
    <property type="evidence" value="ECO:0007669"/>
    <property type="project" value="UniProtKB-SubCell"/>
</dbReference>
<dbReference type="GO" id="GO:0005737">
    <property type="term" value="C:cytoplasm"/>
    <property type="evidence" value="ECO:0000314"/>
    <property type="project" value="MGI"/>
</dbReference>
<dbReference type="GO" id="GO:0031410">
    <property type="term" value="C:cytoplasmic vesicle"/>
    <property type="evidence" value="ECO:0000250"/>
    <property type="project" value="UniProtKB"/>
</dbReference>
<dbReference type="GO" id="GO:0030659">
    <property type="term" value="C:cytoplasmic vesicle membrane"/>
    <property type="evidence" value="ECO:0000250"/>
    <property type="project" value="UniProtKB"/>
</dbReference>
<dbReference type="GO" id="GO:0005829">
    <property type="term" value="C:cytosol"/>
    <property type="evidence" value="ECO:0000353"/>
    <property type="project" value="MGI"/>
</dbReference>
<dbReference type="GO" id="GO:0005886">
    <property type="term" value="C:plasma membrane"/>
    <property type="evidence" value="ECO:0000314"/>
    <property type="project" value="MGI"/>
</dbReference>
<dbReference type="GO" id="GO:0098793">
    <property type="term" value="C:presynapse"/>
    <property type="evidence" value="ECO:0007669"/>
    <property type="project" value="Ensembl"/>
</dbReference>
<dbReference type="GO" id="GO:0001726">
    <property type="term" value="C:ruffle"/>
    <property type="evidence" value="ECO:0007669"/>
    <property type="project" value="UniProtKB-SubCell"/>
</dbReference>
<dbReference type="GO" id="GO:0005802">
    <property type="term" value="C:trans-Golgi network"/>
    <property type="evidence" value="ECO:0000250"/>
    <property type="project" value="UniProtKB"/>
</dbReference>
<dbReference type="GO" id="GO:0005545">
    <property type="term" value="F:1-phosphatidylinositol binding"/>
    <property type="evidence" value="ECO:0000250"/>
    <property type="project" value="UniProtKB"/>
</dbReference>
<dbReference type="GO" id="GO:0071933">
    <property type="term" value="F:Arp2/3 complex binding"/>
    <property type="evidence" value="ECO:0007669"/>
    <property type="project" value="Ensembl"/>
</dbReference>
<dbReference type="GO" id="GO:0035091">
    <property type="term" value="F:phosphatidylinositol binding"/>
    <property type="evidence" value="ECO:0000314"/>
    <property type="project" value="MGI"/>
</dbReference>
<dbReference type="GO" id="GO:0042803">
    <property type="term" value="F:protein homodimerization activity"/>
    <property type="evidence" value="ECO:0007669"/>
    <property type="project" value="Ensembl"/>
</dbReference>
<dbReference type="GO" id="GO:0031625">
    <property type="term" value="F:ubiquitin protein ligase binding"/>
    <property type="evidence" value="ECO:0007669"/>
    <property type="project" value="Ensembl"/>
</dbReference>
<dbReference type="GO" id="GO:0036089">
    <property type="term" value="P:cleavage furrow formation"/>
    <property type="evidence" value="ECO:0000250"/>
    <property type="project" value="UniProtKB"/>
</dbReference>
<dbReference type="GO" id="GO:0006897">
    <property type="term" value="P:endocytosis"/>
    <property type="evidence" value="ECO:0000250"/>
    <property type="project" value="UniProtKB"/>
</dbReference>
<dbReference type="GO" id="GO:0016197">
    <property type="term" value="P:endosomal transport"/>
    <property type="evidence" value="ECO:0000250"/>
    <property type="project" value="UniProtKB"/>
</dbReference>
<dbReference type="GO" id="GO:0006886">
    <property type="term" value="P:intracellular protein transport"/>
    <property type="evidence" value="ECO:0000315"/>
    <property type="project" value="MGI"/>
</dbReference>
<dbReference type="GO" id="GO:0060988">
    <property type="term" value="P:lipid tube assembly"/>
    <property type="evidence" value="ECO:0000250"/>
    <property type="project" value="UniProtKB"/>
</dbReference>
<dbReference type="GO" id="GO:0000281">
    <property type="term" value="P:mitotic cytokinesis"/>
    <property type="evidence" value="ECO:0000250"/>
    <property type="project" value="UniProtKB"/>
</dbReference>
<dbReference type="GO" id="GO:0097320">
    <property type="term" value="P:plasma membrane tubulation"/>
    <property type="evidence" value="ECO:0007669"/>
    <property type="project" value="Ensembl"/>
</dbReference>
<dbReference type="GO" id="GO:0030838">
    <property type="term" value="P:positive regulation of actin filament polymerization"/>
    <property type="evidence" value="ECO:0000314"/>
    <property type="project" value="UniProtKB"/>
</dbReference>
<dbReference type="GO" id="GO:0043547">
    <property type="term" value="P:positive regulation of GTPase activity"/>
    <property type="evidence" value="ECO:0000250"/>
    <property type="project" value="UniProtKB"/>
</dbReference>
<dbReference type="GO" id="GO:0051044">
    <property type="term" value="P:positive regulation of membrane protein ectodomain proteolysis"/>
    <property type="evidence" value="ECO:0007669"/>
    <property type="project" value="Ensembl"/>
</dbReference>
<dbReference type="GO" id="GO:0065003">
    <property type="term" value="P:protein-containing complex assembly"/>
    <property type="evidence" value="ECO:0000250"/>
    <property type="project" value="UniProtKB"/>
</dbReference>
<dbReference type="GO" id="GO:0006898">
    <property type="term" value="P:receptor-mediated endocytosis"/>
    <property type="evidence" value="ECO:0000250"/>
    <property type="project" value="UniProtKB"/>
</dbReference>
<dbReference type="GO" id="GO:1900242">
    <property type="term" value="P:regulation of synaptic vesicle endocytosis"/>
    <property type="evidence" value="ECO:0007669"/>
    <property type="project" value="Ensembl"/>
</dbReference>
<dbReference type="CDD" id="cd07668">
    <property type="entry name" value="BAR_SNX9"/>
    <property type="match status" value="1"/>
</dbReference>
<dbReference type="CDD" id="cd07285">
    <property type="entry name" value="PX_SNX9"/>
    <property type="match status" value="1"/>
</dbReference>
<dbReference type="CDD" id="cd11898">
    <property type="entry name" value="SH3_SNX9"/>
    <property type="match status" value="1"/>
</dbReference>
<dbReference type="FunFam" id="1.20.1270.60:FF:000032">
    <property type="entry name" value="Sorting nexin"/>
    <property type="match status" value="1"/>
</dbReference>
<dbReference type="FunFam" id="2.30.30.40:FF:000199">
    <property type="entry name" value="Sorting nexin"/>
    <property type="match status" value="1"/>
</dbReference>
<dbReference type="FunFam" id="3.30.1520.10:FF:000004">
    <property type="entry name" value="Sorting nexin"/>
    <property type="match status" value="1"/>
</dbReference>
<dbReference type="Gene3D" id="1.20.1270.60">
    <property type="entry name" value="Arfaptin homology (AH) domain/BAR domain"/>
    <property type="match status" value="1"/>
</dbReference>
<dbReference type="Gene3D" id="3.30.1520.10">
    <property type="entry name" value="Phox-like domain"/>
    <property type="match status" value="1"/>
</dbReference>
<dbReference type="Gene3D" id="2.30.30.40">
    <property type="entry name" value="SH3 Domains"/>
    <property type="match status" value="1"/>
</dbReference>
<dbReference type="InterPro" id="IPR027267">
    <property type="entry name" value="AH/BAR_dom_sf"/>
</dbReference>
<dbReference type="InterPro" id="IPR001683">
    <property type="entry name" value="PX_dom"/>
</dbReference>
<dbReference type="InterPro" id="IPR036871">
    <property type="entry name" value="PX_dom_sf"/>
</dbReference>
<dbReference type="InterPro" id="IPR036028">
    <property type="entry name" value="SH3-like_dom_sf"/>
</dbReference>
<dbReference type="InterPro" id="IPR001452">
    <property type="entry name" value="SH3_domain"/>
</dbReference>
<dbReference type="InterPro" id="IPR037425">
    <property type="entry name" value="SNX9_BAR"/>
</dbReference>
<dbReference type="InterPro" id="IPR014536">
    <property type="entry name" value="Snx9_fam"/>
</dbReference>
<dbReference type="InterPro" id="IPR037426">
    <property type="entry name" value="SNX9_PX"/>
</dbReference>
<dbReference type="InterPro" id="IPR035558">
    <property type="entry name" value="SNX9_SH3"/>
</dbReference>
<dbReference type="InterPro" id="IPR019497">
    <property type="entry name" value="Sorting_nexin_WASP-bd-dom"/>
</dbReference>
<dbReference type="PANTHER" id="PTHR45827">
    <property type="entry name" value="SORTING NEXIN"/>
    <property type="match status" value="1"/>
</dbReference>
<dbReference type="PANTHER" id="PTHR45827:SF2">
    <property type="entry name" value="SORTING NEXIN-9"/>
    <property type="match status" value="1"/>
</dbReference>
<dbReference type="Pfam" id="PF10456">
    <property type="entry name" value="BAR_3_WASP_bdg"/>
    <property type="match status" value="1"/>
</dbReference>
<dbReference type="Pfam" id="PF00787">
    <property type="entry name" value="PX"/>
    <property type="match status" value="1"/>
</dbReference>
<dbReference type="Pfam" id="PF00018">
    <property type="entry name" value="SH3_1"/>
    <property type="match status" value="1"/>
</dbReference>
<dbReference type="PIRSF" id="PIRSF027744">
    <property type="entry name" value="Snx9"/>
    <property type="match status" value="1"/>
</dbReference>
<dbReference type="SMART" id="SM00312">
    <property type="entry name" value="PX"/>
    <property type="match status" value="1"/>
</dbReference>
<dbReference type="SMART" id="SM00326">
    <property type="entry name" value="SH3"/>
    <property type="match status" value="1"/>
</dbReference>
<dbReference type="SUPFAM" id="SSF103657">
    <property type="entry name" value="BAR/IMD domain-like"/>
    <property type="match status" value="1"/>
</dbReference>
<dbReference type="SUPFAM" id="SSF64268">
    <property type="entry name" value="PX domain"/>
    <property type="match status" value="1"/>
</dbReference>
<dbReference type="SUPFAM" id="SSF50044">
    <property type="entry name" value="SH3-domain"/>
    <property type="match status" value="1"/>
</dbReference>
<dbReference type="PROSITE" id="PS50195">
    <property type="entry name" value="PX"/>
    <property type="match status" value="1"/>
</dbReference>
<dbReference type="PROSITE" id="PS50002">
    <property type="entry name" value="SH3"/>
    <property type="match status" value="1"/>
</dbReference>
<sequence>MATKARVMYDFAAEPGNNELTVTEGEIITVTNPNVGGGWLEGKNNKGEQGLVPTDYVEILPNDGKDPFSCGNSVADQAFLDSLTASTAQTNSSSANSNNQVGGGNDPWTAWNAPKPGNWDSSDAWGSRTDGTSAQRNSSANNWDTGFGHPQAYQGPATGDDDEWDEDWDDPKSSSPYFKDSEPAEAGGIQRGNSRAGASSMKLPLNKFPGFAKPGMEQYLLAKQLAKPKEKIAIIVGDYGPMWVYPTSTFDCVVADPRKGSKMYGLKSYIEYQLTPTNTNRSVNHRYKHFDWLYERLLVKFGSAIPIPSLPDKQVTGRFEEEFIKMRMERLQAWMTRMCRHPVVSESEVFQQFLNFRDEKEWKTGKRKAEKDELVGVMIFSTMEPEAPDLDLIEIEQKCDAVGKFTKAMDDGVKELLTVGQEHWKRCTGPLPKEYQKIGKALQSLAAVFSSSGYQGETDLNDAITEAGKTYEEIASLVAEQPKKDLHFLMECNHEYKGFLGCFPDIIGAHKGAIEKVKESDKLVATSKITPQDKQTMVKRVGTMSYALQAEMNHFHSNRIYDYNSVIRLYLEQQVQFYETIAEKLRQALSRFPVM</sequence>
<reference key="1">
    <citation type="journal article" date="2004" name="Genome Res.">
        <title>The status, quality, and expansion of the NIH full-length cDNA project: the Mammalian Gene Collection (MGC).</title>
        <authorList>
            <consortium name="The MGC Project Team"/>
        </authorList>
    </citation>
    <scope>NUCLEOTIDE SEQUENCE [LARGE SCALE MRNA]</scope>
    <source>
        <tissue>Mammary tumor</tissue>
    </source>
</reference>
<reference key="2">
    <citation type="journal article" date="1999" name="J. Biol. Chem.">
        <title>Interaction of the metalloprotease disintegrins MDC9 and MDC15 with two SH3 domain-containing proteins, endophilin I and SH3PX1.</title>
        <authorList>
            <person name="Howard L."/>
            <person name="Nelson K.K."/>
            <person name="Maciewicz R.A."/>
            <person name="Blobel C.P."/>
        </authorList>
    </citation>
    <scope>INTERACTION WITH ADAM9 AND ADAM15</scope>
</reference>
<reference key="3">
    <citation type="journal article" date="2005" name="Nat. Biotechnol.">
        <title>Immunoaffinity profiling of tyrosine phosphorylation in cancer cells.</title>
        <authorList>
            <person name="Rush J."/>
            <person name="Moritz A."/>
            <person name="Lee K.A."/>
            <person name="Guo A."/>
            <person name="Goss V.L."/>
            <person name="Spek E.J."/>
            <person name="Zhang H."/>
            <person name="Zha X.-M."/>
            <person name="Polakiewicz R.D."/>
            <person name="Comb M.J."/>
        </authorList>
    </citation>
    <scope>PHOSPHORYLATION [LARGE SCALE ANALYSIS] AT TYR-239</scope>
    <scope>IDENTIFICATION BY MASS SPECTROMETRY [LARGE SCALE ANALYSIS]</scope>
</reference>
<reference key="4">
    <citation type="journal article" date="2007" name="Proc. Natl. Acad. Sci. U.S.A.">
        <title>Large-scale phosphorylation analysis of mouse liver.</title>
        <authorList>
            <person name="Villen J."/>
            <person name="Beausoleil S.A."/>
            <person name="Gerber S.A."/>
            <person name="Gygi S.P."/>
        </authorList>
    </citation>
    <scope>IDENTIFICATION BY MASS SPECTROMETRY [LARGE SCALE ANALYSIS]</scope>
    <source>
        <tissue>Liver</tissue>
    </source>
</reference>
<reference key="5">
    <citation type="journal article" date="2010" name="Cell">
        <title>A tissue-specific atlas of mouse protein phosphorylation and expression.</title>
        <authorList>
            <person name="Huttlin E.L."/>
            <person name="Jedrychowski M.P."/>
            <person name="Elias J.E."/>
            <person name="Goswami T."/>
            <person name="Rad R."/>
            <person name="Beausoleil S.A."/>
            <person name="Villen J."/>
            <person name="Haas W."/>
            <person name="Sowa M.E."/>
            <person name="Gygi S.P."/>
        </authorList>
    </citation>
    <scope>PHOSPHORYLATION [LARGE SCALE ANALYSIS] AT SER-200</scope>
    <scope>IDENTIFICATION BY MASS SPECTROMETRY [LARGE SCALE ANALYSIS]</scope>
    <source>
        <tissue>Brain</tissue>
        <tissue>Brown adipose tissue</tissue>
        <tissue>Heart</tissue>
        <tissue>Kidney</tissue>
        <tissue>Liver</tissue>
        <tissue>Lung</tissue>
        <tissue>Pancreas</tissue>
        <tissue>Spleen</tissue>
        <tissue>Testis</tissue>
    </source>
</reference>
<reference key="6">
    <citation type="journal article" date="2013" name="PLoS ONE">
        <title>FCHSD1 and FCHSD2 are expressed in hair cell stereocilia and cuticular plate and regulate actin polymerization in vitro.</title>
        <authorList>
            <person name="Cao H."/>
            <person name="Yin X."/>
            <person name="Cao Y."/>
            <person name="Jin Y."/>
            <person name="Wang S."/>
            <person name="Kong Y."/>
            <person name="Chen Y."/>
            <person name="Gao J."/>
            <person name="Heller S."/>
            <person name="Xu Z."/>
        </authorList>
    </citation>
    <scope>FUNCTION</scope>
    <scope>INTERACTION WITH FCHSD1</scope>
    <scope>TISSUE SPECIFICITY</scope>
</reference>
<reference key="7">
    <citation type="submission" date="2007-10" db="PDB data bank">
        <title>Solution structure of the SH3 domain from mouse sorting nexin-9.</title>
        <authorList>
            <consortium name="RIKEN structural genomics initiative (RSGI)"/>
        </authorList>
    </citation>
    <scope>STRUCTURE BY NMR OF 1-70</scope>
</reference>
<gene>
    <name type="primary">Snx9</name>
</gene>
<comment type="function">
    <text evidence="1 7">Involved in endocytosis and intracellular vesicle trafficking, both during interphase and at the end of mitosis. Required for efficient progress through mitosis and cytokinesis. Required for normal formation of the cleavage furrow at the end of mitosis. Plays a role in endocytosis via clathrin-coated pits, but also clathrin-independent, actin-dependent fluid-phase endocytosis. Plays a role in macropinocytosis. Promotes internalization of TNFR. Promotes degradation of EGFR after EGF signaling. Stimulates the GTPase activity of DNM1. Promotes DNM1 oligomerization. Promotes activation of the Arp2/3 complex by WASL, and thereby plays a role in the reorganization of the F-actin cytoskeleton (PubMed:23437151). Binds to membranes enriched in phosphatidylinositol 4,5-bisphosphate and promotes membrane tubulation. Has lower affinity for membranes enriched in phosphatidylinositol 3-phosphate (By similarity).</text>
</comment>
<comment type="subunit">
    <text evidence="1 6 7">Homodimer, and homooligomer. Heterodimer with SNX18. Interacts with ITCH. Interacts (via SH3 domain) with TNK2, WASL and ACTR3. Identified in a complex with TNK2 and clathrin heavy chains. Identified in a complex with the AP-2 complex, clathrin and DNM2. Interacts (via SH3 domain) with DNM1 and DNM2. Identified in an oligomeric complex containing DNM1 and SNX9 (By similarity). Interacts with FCHSD1 (PubMed:23437151). Interacts with ADAM9 and ADAM15 cytoplasmic tails (PubMed:10531379).</text>
</comment>
<comment type="interaction">
    <interactant intactId="EBI-8429356">
        <id>Q91VH2</id>
    </interactant>
    <interactant intactId="EBI-6148898">
        <id>Q01968</id>
        <label>OCRL</label>
    </interactant>
    <organismsDiffer>true</organismsDiffer>
    <experiments>2</experiments>
</comment>
<comment type="subcellular location">
    <subcellularLocation>
        <location evidence="1">Cytoplasmic vesicle membrane</location>
        <topology evidence="1">Peripheral membrane protein</topology>
        <orientation evidence="1">Cytoplasmic side</orientation>
    </subcellularLocation>
    <subcellularLocation>
        <location evidence="1">Cell membrane</location>
        <topology evidence="1">Peripheral membrane protein</topology>
        <orientation evidence="1">Cytoplasmic side</orientation>
    </subcellularLocation>
    <subcellularLocation>
        <location evidence="1">Cytoplasmic vesicle</location>
        <location evidence="1">Clathrin-coated vesicle</location>
    </subcellularLocation>
    <subcellularLocation>
        <location evidence="1">Golgi apparatus</location>
        <location evidence="1">trans-Golgi network</location>
    </subcellularLocation>
    <subcellularLocation>
        <location evidence="1">Cell projection</location>
        <location evidence="1">Ruffle</location>
    </subcellularLocation>
    <subcellularLocation>
        <location evidence="1">Cytoplasm</location>
    </subcellularLocation>
    <text evidence="1">Localized at sites of endocytosis at the cell membrane. Detected on newly formed macropinosomes. Transiently recruited to clathrin-coated pits at a late stage of clathrin-coated vesicle formation (By similarity). Colocalizes with the actin cytoskeleton at the cell membrane (By similarity).</text>
</comment>
<comment type="tissue specificity">
    <text evidence="7">Detected in inner ear vestibula and in the cuticular plate of cochlear hair cells (at protein level).</text>
</comment>
<comment type="domain">
    <text evidence="2">The PX domain mediates interaction with membranes enriched in phosphatidylinositol phosphate. Has high affinity for phosphatidylinositol 4,5-bisphosphate, but can also bind to membranes enriched in other phosphatidylinositol phosphates.</text>
</comment>
<comment type="PTM">
    <text evidence="1">Phosphorylated on tyrosine residues by TNK2. Phosphorylation promotes its activity in the degradation of EGFR (By similarity).</text>
</comment>
<comment type="PTM">
    <text evidence="2">Ubiquitinated by ITCH.</text>
</comment>
<comment type="similarity">
    <text evidence="8">Belongs to the sorting nexin family.</text>
</comment>
<feature type="chain" id="PRO_0000213853" description="Sorting nexin-9">
    <location>
        <begin position="1"/>
        <end position="595"/>
    </location>
</feature>
<feature type="domain" description="SH3" evidence="4">
    <location>
        <begin position="1"/>
        <end position="62"/>
    </location>
</feature>
<feature type="domain" description="PX" evidence="3">
    <location>
        <begin position="250"/>
        <end position="360"/>
    </location>
</feature>
<feature type="domain" description="BAR">
    <location>
        <begin position="392"/>
        <end position="595"/>
    </location>
</feature>
<feature type="region of interest" description="Disordered" evidence="5">
    <location>
        <begin position="89"/>
        <end position="199"/>
    </location>
</feature>
<feature type="region of interest" description="Critical for tubulation activity" evidence="1">
    <location>
        <begin position="201"/>
        <end position="213"/>
    </location>
</feature>
<feature type="compositionally biased region" description="Low complexity" evidence="5">
    <location>
        <begin position="89"/>
        <end position="100"/>
    </location>
</feature>
<feature type="compositionally biased region" description="Polar residues" evidence="5">
    <location>
        <begin position="129"/>
        <end position="144"/>
    </location>
</feature>
<feature type="compositionally biased region" description="Acidic residues" evidence="5">
    <location>
        <begin position="159"/>
        <end position="169"/>
    </location>
</feature>
<feature type="binding site" evidence="2">
    <location>
        <position position="286"/>
    </location>
    <ligand>
        <name>a 1,2-diacyl-sn-glycero-3-phospho-(1D-myo-inositol-4,5-bisphosphate)</name>
        <dbReference type="ChEBI" id="CHEBI:58456"/>
    </ligand>
</feature>
<feature type="binding site" evidence="2">
    <location>
        <position position="288"/>
    </location>
    <ligand>
        <name>a 1,2-diacyl-sn-glycero-3-phospho-(1D-myo-inositol-4,5-bisphosphate)</name>
        <dbReference type="ChEBI" id="CHEBI:58456"/>
    </ligand>
</feature>
<feature type="binding site" evidence="2">
    <location>
        <position position="327"/>
    </location>
    <ligand>
        <name>a 1,2-diacyl-sn-glycero-3-phospho-(1D-myo-inositol-4,5-bisphosphate)</name>
        <dbReference type="ChEBI" id="CHEBI:58456"/>
    </ligand>
</feature>
<feature type="modified residue" description="Phosphoserine" evidence="2">
    <location>
        <position position="121"/>
    </location>
</feature>
<feature type="modified residue" description="Phosphoserine" evidence="10">
    <location>
        <position position="200"/>
    </location>
</feature>
<feature type="modified residue" description="Phosphotyrosine" evidence="9">
    <location>
        <position position="239"/>
    </location>
</feature>
<feature type="modified residue" description="N6-acetyllysine" evidence="2">
    <location>
        <position position="288"/>
    </location>
</feature>
<feature type="strand" evidence="11">
    <location>
        <begin position="3"/>
        <end position="9"/>
    </location>
</feature>
<feature type="strand" evidence="11">
    <location>
        <begin position="17"/>
        <end position="19"/>
    </location>
</feature>
<feature type="strand" evidence="11">
    <location>
        <begin position="27"/>
        <end position="33"/>
    </location>
</feature>
<feature type="strand" evidence="11">
    <location>
        <begin position="36"/>
        <end position="43"/>
    </location>
</feature>
<feature type="strand" evidence="11">
    <location>
        <begin position="49"/>
        <end position="53"/>
    </location>
</feature>
<feature type="turn" evidence="11">
    <location>
        <begin position="54"/>
        <end position="56"/>
    </location>
</feature>
<feature type="strand" evidence="11">
    <location>
        <begin position="57"/>
        <end position="60"/>
    </location>
</feature>
<name>SNX9_MOUSE</name>
<protein>
    <recommendedName>
        <fullName>Sorting nexin-9</fullName>
    </recommendedName>
</protein>
<organism>
    <name type="scientific">Mus musculus</name>
    <name type="common">Mouse</name>
    <dbReference type="NCBI Taxonomy" id="10090"/>
    <lineage>
        <taxon>Eukaryota</taxon>
        <taxon>Metazoa</taxon>
        <taxon>Chordata</taxon>
        <taxon>Craniata</taxon>
        <taxon>Vertebrata</taxon>
        <taxon>Euteleostomi</taxon>
        <taxon>Mammalia</taxon>
        <taxon>Eutheria</taxon>
        <taxon>Euarchontoglires</taxon>
        <taxon>Glires</taxon>
        <taxon>Rodentia</taxon>
        <taxon>Myomorpha</taxon>
        <taxon>Muroidea</taxon>
        <taxon>Muridae</taxon>
        <taxon>Murinae</taxon>
        <taxon>Mus</taxon>
        <taxon>Mus</taxon>
    </lineage>
</organism>
<accession>Q91VH2</accession>
<keyword id="KW-0002">3D-structure</keyword>
<keyword id="KW-0007">Acetylation</keyword>
<keyword id="KW-0131">Cell cycle</keyword>
<keyword id="KW-0132">Cell division</keyword>
<keyword id="KW-1003">Cell membrane</keyword>
<keyword id="KW-0966">Cell projection</keyword>
<keyword id="KW-0963">Cytoplasm</keyword>
<keyword id="KW-0968">Cytoplasmic vesicle</keyword>
<keyword id="KW-0254">Endocytosis</keyword>
<keyword id="KW-0333">Golgi apparatus</keyword>
<keyword id="KW-0446">Lipid-binding</keyword>
<keyword id="KW-0472">Membrane</keyword>
<keyword id="KW-0498">Mitosis</keyword>
<keyword id="KW-0597">Phosphoprotein</keyword>
<keyword id="KW-0653">Protein transport</keyword>
<keyword id="KW-1185">Reference proteome</keyword>
<keyword id="KW-0728">SH3 domain</keyword>
<keyword id="KW-0813">Transport</keyword>
<keyword id="KW-0832">Ubl conjugation</keyword>
<proteinExistence type="evidence at protein level"/>